<keyword id="KW-0342">GTP-binding</keyword>
<keyword id="KW-0547">Nucleotide-binding</keyword>
<keyword id="KW-0548">Nucleotidyltransferase</keyword>
<keyword id="KW-1185">Reference proteome</keyword>
<keyword id="KW-0808">Transferase</keyword>
<accession>D4GVD5</accession>
<sequence length="206" mass="21830">MRVVVPFGGRDPKTRLAPFFDADERREFAVSMLRDVLDAVRAVGGDPAVVADALVTVDAPVTVDDRPLTEVVGGELDDLGGGPVAVVMADLALATPAALSRLFETDADVVAAPGLGGGTNALVVRHPEFSVDYHGASILDHRRIARDAGCSFAEVDSMRLAVDVDEPSDLVEVLVHGEGRAREWLVDAGVRLARGSGRVEAVRERR</sequence>
<gene>
    <name evidence="1" type="primary">cofC</name>
    <name type="ordered locus">HVO_2202</name>
</gene>
<organism>
    <name type="scientific">Haloferax volcanii (strain ATCC 29605 / DSM 3757 / JCM 8879 / NBRC 14742 / NCIMB 2012 / VKM B-1768 / DS2)</name>
    <name type="common">Halobacterium volcanii</name>
    <dbReference type="NCBI Taxonomy" id="309800"/>
    <lineage>
        <taxon>Archaea</taxon>
        <taxon>Methanobacteriati</taxon>
        <taxon>Methanobacteriota</taxon>
        <taxon>Stenosarchaea group</taxon>
        <taxon>Halobacteria</taxon>
        <taxon>Halobacteriales</taxon>
        <taxon>Haloferacaceae</taxon>
        <taxon>Haloferax</taxon>
    </lineage>
</organism>
<dbReference type="EC" id="2.7.7.68" evidence="1"/>
<dbReference type="EMBL" id="CP001956">
    <property type="protein sequence ID" value="ADE04441.1"/>
    <property type="molecule type" value="Genomic_DNA"/>
</dbReference>
<dbReference type="RefSeq" id="WP_004042094.1">
    <property type="nucleotide sequence ID" value="NC_013967.1"/>
</dbReference>
<dbReference type="SMR" id="D4GVD5"/>
<dbReference type="STRING" id="309800.HVO_2202"/>
<dbReference type="PaxDb" id="309800-C498_06303"/>
<dbReference type="EnsemblBacteria" id="ADE04441">
    <property type="protein sequence ID" value="ADE04441"/>
    <property type="gene ID" value="HVO_2202"/>
</dbReference>
<dbReference type="GeneID" id="8926686"/>
<dbReference type="KEGG" id="hvo:HVO_2202"/>
<dbReference type="eggNOG" id="arCOG04472">
    <property type="taxonomic scope" value="Archaea"/>
</dbReference>
<dbReference type="HOGENOM" id="CLU_076569_2_0_2"/>
<dbReference type="OrthoDB" id="11179at2157"/>
<dbReference type="UniPathway" id="UPA00071"/>
<dbReference type="Proteomes" id="UP000008243">
    <property type="component" value="Chromosome"/>
</dbReference>
<dbReference type="GO" id="GO:0005525">
    <property type="term" value="F:GTP binding"/>
    <property type="evidence" value="ECO:0007669"/>
    <property type="project" value="UniProtKB-KW"/>
</dbReference>
<dbReference type="GO" id="GO:0043814">
    <property type="term" value="F:phospholactate guanylyltransferase activity"/>
    <property type="evidence" value="ECO:0007669"/>
    <property type="project" value="UniProtKB-EC"/>
</dbReference>
<dbReference type="GO" id="GO:0052645">
    <property type="term" value="P:F420-0 metabolic process"/>
    <property type="evidence" value="ECO:0007669"/>
    <property type="project" value="UniProtKB-UniRule"/>
</dbReference>
<dbReference type="Gene3D" id="6.10.140.50">
    <property type="match status" value="1"/>
</dbReference>
<dbReference type="Gene3D" id="3.90.550.10">
    <property type="entry name" value="Spore Coat Polysaccharide Biosynthesis Protein SpsA, Chain A"/>
    <property type="match status" value="1"/>
</dbReference>
<dbReference type="HAMAP" id="MF_02114">
    <property type="entry name" value="CofC"/>
    <property type="match status" value="1"/>
</dbReference>
<dbReference type="InterPro" id="IPR002835">
    <property type="entry name" value="CofC"/>
</dbReference>
<dbReference type="InterPro" id="IPR029044">
    <property type="entry name" value="Nucleotide-diphossugar_trans"/>
</dbReference>
<dbReference type="NCBIfam" id="TIGR03552">
    <property type="entry name" value="F420_cofC"/>
    <property type="match status" value="1"/>
</dbReference>
<dbReference type="PANTHER" id="PTHR40392">
    <property type="entry name" value="2-PHOSPHO-L-LACTATE GUANYLYLTRANSFERASE"/>
    <property type="match status" value="1"/>
</dbReference>
<dbReference type="PANTHER" id="PTHR40392:SF1">
    <property type="entry name" value="2-PHOSPHO-L-LACTATE GUANYLYLTRANSFERASE"/>
    <property type="match status" value="1"/>
</dbReference>
<dbReference type="Pfam" id="PF01983">
    <property type="entry name" value="CofC"/>
    <property type="match status" value="1"/>
</dbReference>
<dbReference type="SUPFAM" id="SSF53448">
    <property type="entry name" value="Nucleotide-diphospho-sugar transferases"/>
    <property type="match status" value="1"/>
</dbReference>
<name>COFC_HALVD</name>
<reference key="1">
    <citation type="journal article" date="2010" name="PLoS ONE">
        <title>The complete genome sequence of Haloferax volcanii DS2, a model archaeon.</title>
        <authorList>
            <person name="Hartman A.L."/>
            <person name="Norais C."/>
            <person name="Badger J.H."/>
            <person name="Delmas S."/>
            <person name="Haldenby S."/>
            <person name="Madupu R."/>
            <person name="Robinson J."/>
            <person name="Khouri H."/>
            <person name="Ren Q."/>
            <person name="Lowe T.M."/>
            <person name="Maupin-Furlow J."/>
            <person name="Pohlschroder M."/>
            <person name="Daniels C."/>
            <person name="Pfeiffer F."/>
            <person name="Allers T."/>
            <person name="Eisen J.A."/>
        </authorList>
    </citation>
    <scope>NUCLEOTIDE SEQUENCE [LARGE SCALE GENOMIC DNA]</scope>
    <source>
        <strain>ATCC 29605 / DSM 3757 / JCM 8879 / NBRC 14742 / NCIMB 2012 / VKM B-1768 / DS2</strain>
    </source>
</reference>
<evidence type="ECO:0000255" key="1">
    <source>
        <dbReference type="HAMAP-Rule" id="MF_02114"/>
    </source>
</evidence>
<protein>
    <recommendedName>
        <fullName evidence="1">2-phospho-L-lactate guanylyltransferase</fullName>
        <shortName evidence="1">LP guanylyltransferase</shortName>
        <ecNumber evidence="1">2.7.7.68</ecNumber>
    </recommendedName>
</protein>
<proteinExistence type="inferred from homology"/>
<comment type="function">
    <text evidence="1">Guanylyltransferase that catalyzes the activation of (2S)-2-phospholactate (2-PL) as (2S)-lactyl-2-diphospho-5'-guanosine, via the condensation of 2-PL with GTP. It is involved in the biosynthesis of coenzyme F420, a hydride carrier cofactor.</text>
</comment>
<comment type="catalytic activity">
    <reaction evidence="1">
        <text>(2S)-2-phospholactate + GTP + H(+) = (2S)-lactyl-2-diphospho-5'-guanosine + diphosphate</text>
        <dbReference type="Rhea" id="RHEA:63424"/>
        <dbReference type="ChEBI" id="CHEBI:15378"/>
        <dbReference type="ChEBI" id="CHEBI:33019"/>
        <dbReference type="ChEBI" id="CHEBI:37565"/>
        <dbReference type="ChEBI" id="CHEBI:59435"/>
        <dbReference type="ChEBI" id="CHEBI:59906"/>
        <dbReference type="EC" id="2.7.7.68"/>
    </reaction>
</comment>
<comment type="pathway">
    <text evidence="1">Cofactor biosynthesis; coenzyme F420 biosynthesis.</text>
</comment>
<comment type="subunit">
    <text evidence="1">Homodimer.</text>
</comment>
<comment type="similarity">
    <text evidence="1">Belongs to the CofC family.</text>
</comment>
<feature type="chain" id="PRO_0000398728" description="2-phospho-L-lactate guanylyltransferase">
    <location>
        <begin position="1"/>
        <end position="206"/>
    </location>
</feature>